<dbReference type="EMBL" id="X78461">
    <property type="protein sequence ID" value="CAA55216.1"/>
    <property type="molecule type" value="mRNA"/>
</dbReference>
<dbReference type="PIR" id="S43667">
    <property type="entry name" value="S43667"/>
</dbReference>
<dbReference type="SMR" id="P52188"/>
<dbReference type="CORUM" id="P52188"/>
<dbReference type="FunCoup" id="P52188">
    <property type="interactions" value="37"/>
</dbReference>
<dbReference type="IntAct" id="P52188">
    <property type="interactions" value="8"/>
</dbReference>
<dbReference type="MINT" id="P52188"/>
<dbReference type="STRING" id="10116.ENSRNOP00000054762"/>
<dbReference type="GuidetoPHARMACOLOGY" id="431"/>
<dbReference type="iPTMnet" id="P52188"/>
<dbReference type="PhosphoSitePlus" id="P52188"/>
<dbReference type="PaxDb" id="10116-ENSRNOP00000054762"/>
<dbReference type="ABCD" id="P52188">
    <property type="antibodies" value="1 sequenced antibody"/>
</dbReference>
<dbReference type="UCSC" id="RGD:621660">
    <property type="organism name" value="rat"/>
</dbReference>
<dbReference type="AGR" id="RGD:621660"/>
<dbReference type="RGD" id="621660">
    <property type="gene designation" value="Kcnj12"/>
</dbReference>
<dbReference type="eggNOG" id="KOG3827">
    <property type="taxonomic scope" value="Eukaryota"/>
</dbReference>
<dbReference type="InParanoid" id="P52188"/>
<dbReference type="OrthoDB" id="273257at2759"/>
<dbReference type="PhylomeDB" id="P52188"/>
<dbReference type="Reactome" id="R-RNO-1296041">
    <property type="pathway name" value="Activation of G protein gated Potassium channels"/>
</dbReference>
<dbReference type="Reactome" id="R-RNO-1296053">
    <property type="pathway name" value="Classical Kir channels"/>
</dbReference>
<dbReference type="Reactome" id="R-RNO-5576886">
    <property type="pathway name" value="Phase 4 - resting membrane potential"/>
</dbReference>
<dbReference type="Reactome" id="R-RNO-997272">
    <property type="pathway name" value="Inhibition of voltage gated Ca2+ channels via Gbeta/gamma subunits"/>
</dbReference>
<dbReference type="PRO" id="PR:P52188"/>
<dbReference type="Proteomes" id="UP000002494">
    <property type="component" value="Unplaced"/>
</dbReference>
<dbReference type="GO" id="GO:0030425">
    <property type="term" value="C:dendrite"/>
    <property type="evidence" value="ECO:0000314"/>
    <property type="project" value="RGD"/>
</dbReference>
<dbReference type="GO" id="GO:0016020">
    <property type="term" value="C:membrane"/>
    <property type="evidence" value="ECO:0000250"/>
    <property type="project" value="UniProtKB"/>
</dbReference>
<dbReference type="GO" id="GO:0034702">
    <property type="term" value="C:monoatomic ion channel complex"/>
    <property type="evidence" value="ECO:0007669"/>
    <property type="project" value="UniProtKB-KW"/>
</dbReference>
<dbReference type="GO" id="GO:0043025">
    <property type="term" value="C:neuronal cell body"/>
    <property type="evidence" value="ECO:0000314"/>
    <property type="project" value="RGD"/>
</dbReference>
<dbReference type="GO" id="GO:0005886">
    <property type="term" value="C:plasma membrane"/>
    <property type="evidence" value="ECO:0000318"/>
    <property type="project" value="GO_Central"/>
</dbReference>
<dbReference type="GO" id="GO:0030315">
    <property type="term" value="C:T-tubule"/>
    <property type="evidence" value="ECO:0000314"/>
    <property type="project" value="UniProtKB"/>
</dbReference>
<dbReference type="GO" id="GO:0005242">
    <property type="term" value="F:inward rectifier potassium channel activity"/>
    <property type="evidence" value="ECO:0000250"/>
    <property type="project" value="UniProtKB"/>
</dbReference>
<dbReference type="GO" id="GO:0046872">
    <property type="term" value="F:metal ion binding"/>
    <property type="evidence" value="ECO:0007669"/>
    <property type="project" value="UniProtKB-KW"/>
</dbReference>
<dbReference type="GO" id="GO:0030165">
    <property type="term" value="F:PDZ domain binding"/>
    <property type="evidence" value="ECO:0000353"/>
    <property type="project" value="RGD"/>
</dbReference>
<dbReference type="GO" id="GO:1990573">
    <property type="term" value="P:potassium ion import across plasma membrane"/>
    <property type="evidence" value="ECO:0000318"/>
    <property type="project" value="GO_Central"/>
</dbReference>
<dbReference type="GO" id="GO:0006813">
    <property type="term" value="P:potassium ion transport"/>
    <property type="evidence" value="ECO:0000250"/>
    <property type="project" value="UniProtKB"/>
</dbReference>
<dbReference type="GO" id="GO:0051289">
    <property type="term" value="P:protein homotetramerization"/>
    <property type="evidence" value="ECO:0000250"/>
    <property type="project" value="UniProtKB"/>
</dbReference>
<dbReference type="GO" id="GO:0034765">
    <property type="term" value="P:regulation of monoatomic ion transmembrane transport"/>
    <property type="evidence" value="ECO:0000318"/>
    <property type="project" value="GO_Central"/>
</dbReference>
<dbReference type="FunFam" id="1.10.287.70:FF:000039">
    <property type="entry name" value="ATP-sensitive inward rectifier potassium channel 12"/>
    <property type="match status" value="1"/>
</dbReference>
<dbReference type="FunFam" id="2.60.40.1400:FF:000001">
    <property type="entry name" value="G protein-activated inward rectifier potassium channel 2"/>
    <property type="match status" value="1"/>
</dbReference>
<dbReference type="Gene3D" id="1.10.287.70">
    <property type="match status" value="1"/>
</dbReference>
<dbReference type="Gene3D" id="2.60.40.1400">
    <property type="entry name" value="G protein-activated inward rectifier potassium channel 1"/>
    <property type="match status" value="1"/>
</dbReference>
<dbReference type="InterPro" id="IPR014756">
    <property type="entry name" value="Ig_E-set"/>
</dbReference>
<dbReference type="InterPro" id="IPR041647">
    <property type="entry name" value="IRK_C"/>
</dbReference>
<dbReference type="InterPro" id="IPR016449">
    <property type="entry name" value="K_chnl_inward-rec_Kir"/>
</dbReference>
<dbReference type="InterPro" id="IPR003272">
    <property type="entry name" value="K_chnl_inward-rec_Kir2.2"/>
</dbReference>
<dbReference type="InterPro" id="IPR013518">
    <property type="entry name" value="K_chnl_inward-rec_Kir_cyto"/>
</dbReference>
<dbReference type="InterPro" id="IPR013673">
    <property type="entry name" value="K_chnl_inward-rec_Kir_N"/>
</dbReference>
<dbReference type="InterPro" id="IPR040445">
    <property type="entry name" value="Kir_TM"/>
</dbReference>
<dbReference type="PANTHER" id="PTHR11767:SF14">
    <property type="entry name" value="ATP-SENSITIVE INWARD RECTIFIER POTASSIUM CHANNEL 12-RELATED"/>
    <property type="match status" value="1"/>
</dbReference>
<dbReference type="PANTHER" id="PTHR11767">
    <property type="entry name" value="INWARD RECTIFIER POTASSIUM CHANNEL"/>
    <property type="match status" value="1"/>
</dbReference>
<dbReference type="Pfam" id="PF01007">
    <property type="entry name" value="IRK"/>
    <property type="match status" value="1"/>
</dbReference>
<dbReference type="Pfam" id="PF17655">
    <property type="entry name" value="IRK_C"/>
    <property type="match status" value="1"/>
</dbReference>
<dbReference type="Pfam" id="PF08466">
    <property type="entry name" value="IRK_N"/>
    <property type="match status" value="1"/>
</dbReference>
<dbReference type="PRINTS" id="PR01325">
    <property type="entry name" value="KIR22CHANNEL"/>
</dbReference>
<dbReference type="PRINTS" id="PR01320">
    <property type="entry name" value="KIRCHANNEL"/>
</dbReference>
<dbReference type="SUPFAM" id="SSF81296">
    <property type="entry name" value="E set domains"/>
    <property type="match status" value="1"/>
</dbReference>
<dbReference type="SUPFAM" id="SSF81324">
    <property type="entry name" value="Voltage-gated potassium channels"/>
    <property type="match status" value="1"/>
</dbReference>
<proteinExistence type="evidence at protein level"/>
<accession>P52188</accession>
<comment type="function">
    <text evidence="5 8 10">Inward rectifying potassium channel that probably participates in controlling the resting membrane potential in electrically excitable cells (By similarity). It probably participates in establishing action potential waveform and excitability of neuronal and muscle tissues (By similarity). Inward rectifier potassium channels are characterized by a greater tendency to allow potassium to flow into the cell rather than out of it. Their voltage dependence is regulated by the concentration of extracellular potassium; as external potassium is raised, the voltage range of the channel opening shifts to more positive voltages. The inward rectification is mainly due to the blockage of outward current by internal magnesium.</text>
</comment>
<comment type="catalytic activity">
    <reaction evidence="3">
        <text>K(+)(in) = K(+)(out)</text>
        <dbReference type="Rhea" id="RHEA:29463"/>
        <dbReference type="ChEBI" id="CHEBI:29103"/>
    </reaction>
</comment>
<comment type="activity regulation">
    <text evidence="2 5 10">Activated by phosphatidylinositol 4,5-biphosphate (PtdIns(4,5)P2) (By similarity). PtdIns(4,5)P2 binding to the cytoplasmic side of the channel triggers a conformation change leading to channel opening (By similarity). Inhibited by Ba(2+) (PubMed:8137958).</text>
</comment>
<comment type="subunit">
    <text evidence="5 8">Homotetramer (By similarity). Forms heteromer with KCNJ4 (By similarity). Can form heteromeric channels with Kir2.6/KCNJ18 (By similarity). Association, via its PDZ-recognition domain, with LIN7A, LIN7B, LIN7C, DLG1, CASK and APBA1 plays a key role in its localization and trafficking (PubMed:14960569).</text>
</comment>
<comment type="subcellular location">
    <subcellularLocation>
        <location evidence="6">Membrane</location>
        <topology evidence="6">Multi-pass membrane protein</topology>
    </subcellularLocation>
    <subcellularLocation>
        <location evidence="9">Cell membrane</location>
    </subcellularLocation>
    <subcellularLocation>
        <location evidence="9">Cell membrane</location>
        <location evidence="9">Sarcolemma</location>
        <location evidence="9">T-tubule</location>
    </subcellularLocation>
</comment>
<comment type="tissue specificity">
    <text evidence="10">Highest level in cerebellum. Moderately found in kidney, forebrain and skeletal muscle. Not detected in uterus, liver and pancreas.</text>
</comment>
<comment type="similarity">
    <text evidence="11">Belongs to the inward rectifier-type potassium channel (TC 1.A.2.1) family. KCNJ12 subfamily.</text>
</comment>
<gene>
    <name type="primary">Kcnj12</name>
    <name type="synonym">Irk2</name>
</gene>
<reference key="1">
    <citation type="journal article" date="1994" name="FEBS Lett.">
        <title>Molecular cloning, functional expression and localization of a novel inward rectifier potassium channel in the rat brain.</title>
        <authorList>
            <person name="Koyama H."/>
            <person name="Morishige K."/>
            <person name="Takahashi N."/>
            <person name="Zanelli J.S."/>
            <person name="Fass D.N."/>
            <person name="Kurachi Y."/>
        </authorList>
    </citation>
    <scope>NUCLEOTIDE SEQUENCE [MRNA]</scope>
    <scope>FUNCTION</scope>
    <scope>ACTIVITY REGULATION</scope>
    <scope>TISSUE SPECIFICITY</scope>
    <source>
        <tissue>Brain</tissue>
    </source>
</reference>
<reference key="2">
    <citation type="journal article" date="2004" name="J. Biol. Chem.">
        <title>A multiprotein trafficking complex composed of SAP97, CASK, Veli, and Mint1 is associated with inward rectifier Kir2 potassium channels.</title>
        <authorList>
            <person name="Leonoudakis D."/>
            <person name="Conti L.R."/>
            <person name="Radeke C.M."/>
            <person name="McGuire L.M."/>
            <person name="Vandenberg C.A."/>
        </authorList>
    </citation>
    <scope>INTERACTION WITH CASK; LIN7A; LIN7B; LIN7C; APBA1 AND DLG1</scope>
    <scope>FUNCTION</scope>
</reference>
<reference key="3">
    <citation type="journal article" date="2011" name="J. Biol. Chem.">
        <title>Kir2.6 regulates the surface expression of Kir2.x inward rectifier potassium channels.</title>
        <authorList>
            <person name="Dassau L."/>
            <person name="Conti L.R."/>
            <person name="Radeke C.M."/>
            <person name="Ptacek L.J."/>
            <person name="Vandenberg C.A."/>
        </authorList>
    </citation>
    <scope>SUBCELLULAR LOCATION</scope>
</reference>
<protein>
    <recommendedName>
        <fullName>ATP-sensitive inward rectifier potassium channel 12</fullName>
    </recommendedName>
    <alternativeName>
        <fullName>Inward rectifier K(+) channel Kir2.2</fullName>
        <shortName>IRK-2</shortName>
    </alternativeName>
    <alternativeName>
        <fullName>Potassium channel, inwardly rectifying subfamily J member 12</fullName>
    </alternativeName>
</protein>
<feature type="chain" id="PRO_0000154964" description="ATP-sensitive inward rectifier potassium channel 12">
    <location>
        <begin position="1"/>
        <end position="427"/>
    </location>
</feature>
<feature type="topological domain" description="Cytoplasmic" evidence="2">
    <location>
        <begin position="1"/>
        <end position="77"/>
    </location>
</feature>
<feature type="transmembrane region" description="Helical; Name=M1" evidence="2">
    <location>
        <begin position="78"/>
        <end position="104"/>
    </location>
</feature>
<feature type="topological domain" description="Extracellular" evidence="2">
    <location>
        <begin position="105"/>
        <end position="129"/>
    </location>
</feature>
<feature type="intramembrane region" description="Helical; Pore-forming; Name=H5" evidence="2">
    <location>
        <begin position="130"/>
        <end position="146"/>
    </location>
</feature>
<feature type="topological domain" description="Extracellular" evidence="2">
    <location>
        <begin position="147"/>
        <end position="155"/>
    </location>
</feature>
<feature type="transmembrane region" description="Helical; Name=M2" evidence="2">
    <location>
        <begin position="156"/>
        <end position="183"/>
    </location>
</feature>
<feature type="topological domain" description="Cytoplasmic" evidence="2">
    <location>
        <begin position="184"/>
        <end position="427"/>
    </location>
</feature>
<feature type="region of interest" description="Disordered" evidence="7">
    <location>
        <begin position="387"/>
        <end position="427"/>
    </location>
</feature>
<feature type="short sequence motif" description="Selectivity filter" evidence="2">
    <location>
        <begin position="143"/>
        <end position="148"/>
    </location>
</feature>
<feature type="short sequence motif" description="PDZ-binding" evidence="6">
    <location>
        <begin position="425"/>
        <end position="427"/>
    </location>
</feature>
<feature type="compositionally biased region" description="Basic and acidic residues" evidence="7">
    <location>
        <begin position="393"/>
        <end position="409"/>
    </location>
</feature>
<feature type="binding site" evidence="2">
    <location>
        <position position="79"/>
    </location>
    <ligand>
        <name>a 1,2-diacyl-sn-glycero-3-phospho-(1D-myo-inositol-4,5-bisphosphate)</name>
        <dbReference type="ChEBI" id="CHEBI:58456"/>
        <note>agonist</note>
    </ligand>
</feature>
<feature type="binding site" evidence="2">
    <location>
        <position position="81"/>
    </location>
    <ligand>
        <name>a 1,2-diacyl-sn-glycero-3-phospho-(1D-myo-inositol-4,5-bisphosphate)</name>
        <dbReference type="ChEBI" id="CHEBI:58456"/>
        <note>agonist</note>
    </ligand>
</feature>
<feature type="binding site" evidence="2">
    <location>
        <position position="143"/>
    </location>
    <ligand>
        <name>K(+)</name>
        <dbReference type="ChEBI" id="CHEBI:29103"/>
        <label>1</label>
        <note>ligand likely shared between the subunits of the homotetramer</note>
    </ligand>
</feature>
<feature type="binding site" evidence="2">
    <location>
        <position position="143"/>
    </location>
    <ligand>
        <name>K(+)</name>
        <dbReference type="ChEBI" id="CHEBI:29103"/>
        <label>2</label>
        <note>ligand likely shared between the subunits of the homotetramer</note>
    </ligand>
</feature>
<feature type="binding site" evidence="2">
    <location>
        <position position="144"/>
    </location>
    <ligand>
        <name>K(+)</name>
        <dbReference type="ChEBI" id="CHEBI:29103"/>
        <label>2</label>
        <note>ligand likely shared between the subunits of the homotetramer</note>
    </ligand>
</feature>
<feature type="binding site" evidence="2">
    <location>
        <position position="144"/>
    </location>
    <ligand>
        <name>K(+)</name>
        <dbReference type="ChEBI" id="CHEBI:29103"/>
        <label>3</label>
        <note>ligand likely shared between the subunits of the homotetramer</note>
    </ligand>
</feature>
<feature type="binding site" evidence="2">
    <location>
        <position position="145"/>
    </location>
    <ligand>
        <name>K(+)</name>
        <dbReference type="ChEBI" id="CHEBI:29103"/>
        <label>3</label>
        <note>ligand likely shared between the subunits of the homotetramer</note>
    </ligand>
</feature>
<feature type="binding site" evidence="2">
    <location>
        <position position="145"/>
    </location>
    <ligand>
        <name>K(+)</name>
        <dbReference type="ChEBI" id="CHEBI:29103"/>
        <label>4</label>
        <note>ligand likely shared between the subunits of the homotetramer</note>
    </ligand>
</feature>
<feature type="binding site" evidence="2">
    <location>
        <position position="146"/>
    </location>
    <ligand>
        <name>K(+)</name>
        <dbReference type="ChEBI" id="CHEBI:29103"/>
        <label>4</label>
        <note>ligand likely shared between the subunits of the homotetramer</note>
    </ligand>
</feature>
<feature type="binding site" evidence="2">
    <location>
        <position position="183"/>
    </location>
    <ligand>
        <name>a 1,2-diacyl-sn-glycero-3-phospho-(1D-myo-inositol-4,5-bisphosphate)</name>
        <dbReference type="ChEBI" id="CHEBI:58456"/>
        <note>agonist</note>
    </ligand>
</feature>
<feature type="binding site" evidence="2">
    <location>
        <position position="188"/>
    </location>
    <ligand>
        <name>a 1,2-diacyl-sn-glycero-3-phospho-(1D-myo-inositol-4,5-bisphosphate)</name>
        <dbReference type="ChEBI" id="CHEBI:58456"/>
        <note>agonist</note>
    </ligand>
</feature>
<feature type="site" description="Role in the control of polyamine-mediated channel gating and in the blocking by intracellular magnesium" evidence="1">
    <location>
        <position position="173"/>
    </location>
</feature>
<feature type="modified residue" description="S-nitrosocysteine" evidence="4">
    <location>
        <position position="75"/>
    </location>
</feature>
<feature type="disulfide bond" evidence="2">
    <location>
        <begin position="123"/>
        <end position="155"/>
    </location>
</feature>
<keyword id="KW-1003">Cell membrane</keyword>
<keyword id="KW-1015">Disulfide bond</keyword>
<keyword id="KW-0407">Ion channel</keyword>
<keyword id="KW-0406">Ion transport</keyword>
<keyword id="KW-0472">Membrane</keyword>
<keyword id="KW-0479">Metal-binding</keyword>
<keyword id="KW-0630">Potassium</keyword>
<keyword id="KW-0633">Potassium transport</keyword>
<keyword id="KW-1185">Reference proteome</keyword>
<keyword id="KW-0702">S-nitrosylation</keyword>
<keyword id="KW-0812">Transmembrane</keyword>
<keyword id="KW-1133">Transmembrane helix</keyword>
<keyword id="KW-0813">Transport</keyword>
<keyword id="KW-0851">Voltage-gated channel</keyword>
<organism>
    <name type="scientific">Rattus norvegicus</name>
    <name type="common">Rat</name>
    <dbReference type="NCBI Taxonomy" id="10116"/>
    <lineage>
        <taxon>Eukaryota</taxon>
        <taxon>Metazoa</taxon>
        <taxon>Chordata</taxon>
        <taxon>Craniata</taxon>
        <taxon>Vertebrata</taxon>
        <taxon>Euteleostomi</taxon>
        <taxon>Mammalia</taxon>
        <taxon>Eutheria</taxon>
        <taxon>Euarchontoglires</taxon>
        <taxon>Glires</taxon>
        <taxon>Rodentia</taxon>
        <taxon>Myomorpha</taxon>
        <taxon>Muroidea</taxon>
        <taxon>Muridae</taxon>
        <taxon>Murinae</taxon>
        <taxon>Rattus</taxon>
    </lineage>
</organism>
<sequence>MTAASRANPYSIVSSEEDGLHLVTMSGANGFGNGKVHTRRRCRNRFVKKNGQCNIEFANMDEKSQRYLADMFTTCVDIRWRYMLLIFSLAFLASWLLFGIIFWVIAVAHGDLEPAEGRGRTPCVLQVHGFMAAFLFSIETQTTIGYGLRCVTEECPVAVFMVVAQSIVGCIIDSFMIGAIMAKMGRPKKRAQTLLFSHNAVVALRDGKLCLMWRVGNLRKSHIVEAHVRAQLIKPRVTEEGEYIPLDQIDIDVGFDKGLDRIFLVSPITILHEIDEASPLFGISRQDLETDDFEIVVILEGMVEATAMTTQARSSYLANEILWGHRFEPVLFEEKNQYKIDYSHFHKTYEVPSTPRCSAKDLVENKFLLPSANSFCYENELAFLSRDEEDEVATDRDGRSPQPEHDFDRLQASSGALERPYRRESEI</sequence>
<name>KCJ12_RAT</name>
<evidence type="ECO:0000250" key="1"/>
<evidence type="ECO:0000250" key="2">
    <source>
        <dbReference type="UniProtKB" id="F1NHE9"/>
    </source>
</evidence>
<evidence type="ECO:0000250" key="3">
    <source>
        <dbReference type="UniProtKB" id="P52187"/>
    </source>
</evidence>
<evidence type="ECO:0000250" key="4">
    <source>
        <dbReference type="UniProtKB" id="P63252"/>
    </source>
</evidence>
<evidence type="ECO:0000250" key="5">
    <source>
        <dbReference type="UniProtKB" id="Q14500"/>
    </source>
</evidence>
<evidence type="ECO:0000255" key="6"/>
<evidence type="ECO:0000256" key="7">
    <source>
        <dbReference type="SAM" id="MobiDB-lite"/>
    </source>
</evidence>
<evidence type="ECO:0000269" key="8">
    <source>
    </source>
</evidence>
<evidence type="ECO:0000269" key="9">
    <source>
    </source>
</evidence>
<evidence type="ECO:0000269" key="10">
    <source>
    </source>
</evidence>
<evidence type="ECO:0000305" key="11"/>